<organism>
    <name type="scientific">Pongo abelii</name>
    <name type="common">Sumatran orangutan</name>
    <name type="synonym">Pongo pygmaeus abelii</name>
    <dbReference type="NCBI Taxonomy" id="9601"/>
    <lineage>
        <taxon>Eukaryota</taxon>
        <taxon>Metazoa</taxon>
        <taxon>Chordata</taxon>
        <taxon>Craniata</taxon>
        <taxon>Vertebrata</taxon>
        <taxon>Euteleostomi</taxon>
        <taxon>Mammalia</taxon>
        <taxon>Eutheria</taxon>
        <taxon>Euarchontoglires</taxon>
        <taxon>Primates</taxon>
        <taxon>Haplorrhini</taxon>
        <taxon>Catarrhini</taxon>
        <taxon>Hominidae</taxon>
        <taxon>Pongo</taxon>
    </lineage>
</organism>
<keyword id="KW-0007">Acetylation</keyword>
<keyword id="KW-0963">Cytoplasm</keyword>
<keyword id="KW-0539">Nucleus</keyword>
<keyword id="KW-0597">Phosphoprotein</keyword>
<keyword id="KW-0653">Protein transport</keyword>
<keyword id="KW-1185">Reference proteome</keyword>
<keyword id="KW-0813">Transport</keyword>
<dbReference type="EMBL" id="CR858398">
    <property type="protein sequence ID" value="CAH90625.1"/>
    <property type="molecule type" value="mRNA"/>
</dbReference>
<dbReference type="RefSeq" id="NP_001127311.1">
    <property type="nucleotide sequence ID" value="NM_001133839.1"/>
</dbReference>
<dbReference type="SMR" id="Q5RC82"/>
<dbReference type="FunCoup" id="Q5RC82">
    <property type="interactions" value="3342"/>
</dbReference>
<dbReference type="STRING" id="9601.ENSPPYP00000015946"/>
<dbReference type="GeneID" id="100174372"/>
<dbReference type="KEGG" id="pon:100174372"/>
<dbReference type="CTD" id="51068"/>
<dbReference type="eggNOG" id="KOG2613">
    <property type="taxonomic scope" value="Eukaryota"/>
</dbReference>
<dbReference type="InParanoid" id="Q5RC82"/>
<dbReference type="OrthoDB" id="203821at2759"/>
<dbReference type="Proteomes" id="UP000001595">
    <property type="component" value="Unplaced"/>
</dbReference>
<dbReference type="GO" id="GO:0005737">
    <property type="term" value="C:cytoplasm"/>
    <property type="evidence" value="ECO:0007669"/>
    <property type="project" value="UniProtKB-SubCell"/>
</dbReference>
<dbReference type="GO" id="GO:0005634">
    <property type="term" value="C:nucleus"/>
    <property type="evidence" value="ECO:0007669"/>
    <property type="project" value="UniProtKB-SubCell"/>
</dbReference>
<dbReference type="GO" id="GO:0043023">
    <property type="term" value="F:ribosomal large subunit binding"/>
    <property type="evidence" value="ECO:0007669"/>
    <property type="project" value="InterPro"/>
</dbReference>
<dbReference type="GO" id="GO:0015031">
    <property type="term" value="P:protein transport"/>
    <property type="evidence" value="ECO:0007669"/>
    <property type="project" value="UniProtKB-KW"/>
</dbReference>
<dbReference type="GO" id="GO:0000055">
    <property type="term" value="P:ribosomal large subunit export from nucleus"/>
    <property type="evidence" value="ECO:0007669"/>
    <property type="project" value="TreeGrafter"/>
</dbReference>
<dbReference type="InterPro" id="IPR039768">
    <property type="entry name" value="Nmd3"/>
</dbReference>
<dbReference type="InterPro" id="IPR007064">
    <property type="entry name" value="Nmd3_N"/>
</dbReference>
<dbReference type="InterPro" id="IPR048898">
    <property type="entry name" value="NMD3_OB"/>
</dbReference>
<dbReference type="InterPro" id="IPR048899">
    <property type="entry name" value="NMD_SH3"/>
</dbReference>
<dbReference type="PANTHER" id="PTHR12746:SF2">
    <property type="entry name" value="60S RIBOSOMAL EXPORT PROTEIN NMD3"/>
    <property type="match status" value="1"/>
</dbReference>
<dbReference type="PANTHER" id="PTHR12746">
    <property type="entry name" value="NONSENSE-MEDIATED MRNA DECAY PROTEIN 3"/>
    <property type="match status" value="1"/>
</dbReference>
<dbReference type="Pfam" id="PF04981">
    <property type="entry name" value="NMD3"/>
    <property type="match status" value="1"/>
</dbReference>
<dbReference type="Pfam" id="PF21192">
    <property type="entry name" value="NMD3_OB"/>
    <property type="match status" value="1"/>
</dbReference>
<dbReference type="Pfam" id="PF21193">
    <property type="entry name" value="NMD_SH3"/>
    <property type="match status" value="1"/>
</dbReference>
<accession>Q5RC82</accession>
<name>NMD3_PONAB</name>
<evidence type="ECO:0000250" key="1">
    <source>
        <dbReference type="UniProtKB" id="Q96D46"/>
    </source>
</evidence>
<evidence type="ECO:0000305" key="2"/>
<feature type="chain" id="PRO_0000323563" description="60S ribosomal export protein NMD3">
    <location>
        <begin position="1"/>
        <end position="503"/>
    </location>
</feature>
<feature type="region of interest" description="Necessary for the nuclear export of the 60S ribosomal subunit" evidence="1">
    <location>
        <begin position="425"/>
        <end position="503"/>
    </location>
</feature>
<feature type="short sequence motif" description="Nuclear and nucleolar localization signal" evidence="1">
    <location>
        <begin position="405"/>
        <end position="422"/>
    </location>
</feature>
<feature type="short sequence motif" description="Nuclear export signal" evidence="1">
    <location>
        <begin position="480"/>
        <end position="489"/>
    </location>
</feature>
<feature type="modified residue" description="N-acetylmethionine" evidence="1">
    <location>
        <position position="1"/>
    </location>
</feature>
<feature type="modified residue" description="Phosphoserine" evidence="1">
    <location>
        <position position="258"/>
    </location>
</feature>
<feature type="modified residue" description="Phosphothreonine" evidence="1">
    <location>
        <position position="433"/>
    </location>
</feature>
<feature type="modified residue" description="Phosphoserine" evidence="1">
    <location>
        <position position="468"/>
    </location>
</feature>
<feature type="modified residue" description="Phosphothreonine" evidence="1">
    <location>
        <position position="470"/>
    </location>
</feature>
<reference key="1">
    <citation type="submission" date="2005-04" db="EMBL/GenBank/DDBJ databases">
        <authorList>
            <consortium name="The German cDNA consortium"/>
        </authorList>
    </citation>
    <scope>NUCLEOTIDE SEQUENCE [LARGE SCALE MRNA]</scope>
    <source>
        <tissue>Brain cortex</tissue>
    </source>
</reference>
<sequence>MEYMTESTDRSPGHILCCECGVPISPNPANICVACLRSKVDISQGIPKQVSISFCKQCQRYFQPPGTWIQCALESRELLALCLKKIKAPLSKVRLVDAGFVWTEPHSKRLKVKLTVQKEVMNGAILQQVFVVDYVVQSQMCGDCHRVEAKDFWKAVIQVRQKTLHKKTFYHLEQLILKYGMHQNTLRIKEIHDGLDFYYSSKQHAQKMVEFLQCTVPCRYKASQRLISQDIHSNTYNYKSTFSVEIVPICKDNVVCLSPKLAQSLGNMNQICVCIRVTSAIHLIDPNTLQVADIDGSTFWSHPFNSLCHPKQLEEFIVMECSIVRDIKRAAGAGMISKKHTLGEVWVQKTSEMNTDKQYFCRTHLGHLLNPGDLVLGFDLANCNLNDEHVNKMNSDRVPDVVLIKKSYDRTKRQRRRNWKLKELARERENMDTDDERQYQDFLEDLEEDEAIRKNVNIYRDSAIPVESDTDDEGAPRISLAEMLEDLHISQDATGEEGASMMT</sequence>
<gene>
    <name type="primary">NMD3</name>
</gene>
<proteinExistence type="evidence at transcript level"/>
<protein>
    <recommendedName>
        <fullName>60S ribosomal export protein NMD3</fullName>
    </recommendedName>
</protein>
<comment type="function">
    <text evidence="1">Acts as an adapter for the XPO1/CRM1-mediated export of the 60S ribosomal subunit.</text>
</comment>
<comment type="subunit">
    <text evidence="1">Found in a 60S ribosomal subunit export complex with RAN and XPO1. Interacts with XPO1. Associates with pre-60S ribosomal particles.</text>
</comment>
<comment type="subcellular location">
    <subcellularLocation>
        <location evidence="1">Cytoplasm</location>
    </subcellularLocation>
    <subcellularLocation>
        <location evidence="1">Nucleus</location>
    </subcellularLocation>
    <text evidence="1">Shuttles between the nucleus/nucleolus and the cytoplasm in a XPO1/CRM1-dependent manner.</text>
</comment>
<comment type="similarity">
    <text evidence="2">Belongs to the NMD3 family.</text>
</comment>